<evidence type="ECO:0000255" key="1">
    <source>
        <dbReference type="PROSITE-ProRule" id="PRU01182"/>
    </source>
</evidence>
<evidence type="ECO:0000305" key="2"/>
<dbReference type="EMBL" id="AB026659">
    <property type="protein sequence ID" value="BAB08659.1"/>
    <property type="molecule type" value="Genomic_DNA"/>
</dbReference>
<dbReference type="EMBL" id="CP002688">
    <property type="protein sequence ID" value="AED96701.1"/>
    <property type="molecule type" value="Genomic_DNA"/>
</dbReference>
<dbReference type="EMBL" id="AY072016">
    <property type="protein sequence ID" value="AAL57709.1"/>
    <property type="molecule type" value="mRNA"/>
</dbReference>
<dbReference type="EMBL" id="AY122887">
    <property type="protein sequence ID" value="AAM67420.1"/>
    <property type="molecule type" value="mRNA"/>
</dbReference>
<dbReference type="RefSeq" id="NP_568832.1">
    <property type="nucleotide sequence ID" value="NM_124976.4"/>
</dbReference>
<dbReference type="SMR" id="Q9FG71"/>
<dbReference type="BioGRID" id="20936">
    <property type="interactions" value="1"/>
</dbReference>
<dbReference type="FunCoup" id="Q9FG71">
    <property type="interactions" value="4455"/>
</dbReference>
<dbReference type="STRING" id="3702.Q9FG71"/>
<dbReference type="PaxDb" id="3702-AT5G55940.1"/>
<dbReference type="ProteomicsDB" id="224533"/>
<dbReference type="DNASU" id="835692"/>
<dbReference type="EnsemblPlants" id="AT5G55940.1">
    <property type="protein sequence ID" value="AT5G55940.1"/>
    <property type="gene ID" value="AT5G55940"/>
</dbReference>
<dbReference type="GeneID" id="835692"/>
<dbReference type="Gramene" id="AT5G55940.1">
    <property type="protein sequence ID" value="AT5G55940.1"/>
    <property type="gene ID" value="AT5G55940"/>
</dbReference>
<dbReference type="KEGG" id="ath:AT5G55940"/>
<dbReference type="Araport" id="AT5G55940"/>
<dbReference type="TAIR" id="AT5G55940">
    <property type="gene designation" value="EMB2731"/>
</dbReference>
<dbReference type="eggNOG" id="KOG3289">
    <property type="taxonomic scope" value="Eukaryota"/>
</dbReference>
<dbReference type="HOGENOM" id="CLU_087337_1_0_1"/>
<dbReference type="InParanoid" id="Q9FG71"/>
<dbReference type="OMA" id="PHCAING"/>
<dbReference type="OrthoDB" id="194468at2759"/>
<dbReference type="PhylomeDB" id="Q9FG71"/>
<dbReference type="PRO" id="PR:Q9FG71"/>
<dbReference type="Proteomes" id="UP000006548">
    <property type="component" value="Chromosome 5"/>
</dbReference>
<dbReference type="ExpressionAtlas" id="Q9FG71">
    <property type="expression patterns" value="baseline and differential"/>
</dbReference>
<dbReference type="GO" id="GO:0072546">
    <property type="term" value="C:EMC complex"/>
    <property type="evidence" value="ECO:0007669"/>
    <property type="project" value="InterPro"/>
</dbReference>
<dbReference type="GO" id="GO:0005783">
    <property type="term" value="C:endoplasmic reticulum"/>
    <property type="evidence" value="ECO:0007005"/>
    <property type="project" value="TAIR"/>
</dbReference>
<dbReference type="GO" id="GO:0009536">
    <property type="term" value="C:plastid"/>
    <property type="evidence" value="ECO:0007005"/>
    <property type="project" value="TAIR"/>
</dbReference>
<dbReference type="CDD" id="cd08060">
    <property type="entry name" value="MPN_UPF0172"/>
    <property type="match status" value="1"/>
</dbReference>
<dbReference type="InterPro" id="IPR005366">
    <property type="entry name" value="EMC8/9"/>
</dbReference>
<dbReference type="InterPro" id="IPR037518">
    <property type="entry name" value="MPN"/>
</dbReference>
<dbReference type="PANTHER" id="PTHR12941">
    <property type="entry name" value="ER MEMBRANE PROTEIN COMPLEX"/>
    <property type="match status" value="1"/>
</dbReference>
<dbReference type="PANTHER" id="PTHR12941:SF10">
    <property type="entry name" value="ER MEMBRANE PROTEIN COMPLEX SUBUNIT 8_9 HOMOLOG"/>
    <property type="match status" value="1"/>
</dbReference>
<dbReference type="Pfam" id="PF03665">
    <property type="entry name" value="UPF0172"/>
    <property type="match status" value="1"/>
</dbReference>
<dbReference type="PROSITE" id="PS50249">
    <property type="entry name" value="MPN"/>
    <property type="match status" value="1"/>
</dbReference>
<proteinExistence type="evidence at transcript level"/>
<gene>
    <name type="primary">EMB2731</name>
    <name type="ordered locus">At5g55940</name>
    <name type="ORF">MYN21.5</name>
</gene>
<sequence length="208" mass="22979">MGMGSNGELKYEISQNAYIKLVLHSLRHKTAAVNGVLVGRISPKDDGVVEISDSVPLFHSNLALLPPLEISLIMIEEHYVAQGLSIVGYFHANERFDDVELCGVAKNIGDHISRYFPQAPILLLNNKKLEALSKGKERSPVMQLCVKDASKNWRVVGADGGSKLLLKEPSANVVLSDYISSEKWKDVTDVDDHLDDVTKDWLNPGLFN</sequence>
<name>EMC89_ARATH</name>
<feature type="chain" id="PRO_0000221192" description="ER membrane protein complex subunit 8/9 homolog">
    <location>
        <begin position="1"/>
        <end position="208"/>
    </location>
</feature>
<feature type="domain" description="MPN" evidence="1">
    <location>
        <begin position="11"/>
        <end position="146"/>
    </location>
</feature>
<organism>
    <name type="scientific">Arabidopsis thaliana</name>
    <name type="common">Mouse-ear cress</name>
    <dbReference type="NCBI Taxonomy" id="3702"/>
    <lineage>
        <taxon>Eukaryota</taxon>
        <taxon>Viridiplantae</taxon>
        <taxon>Streptophyta</taxon>
        <taxon>Embryophyta</taxon>
        <taxon>Tracheophyta</taxon>
        <taxon>Spermatophyta</taxon>
        <taxon>Magnoliopsida</taxon>
        <taxon>eudicotyledons</taxon>
        <taxon>Gunneridae</taxon>
        <taxon>Pentapetalae</taxon>
        <taxon>rosids</taxon>
        <taxon>malvids</taxon>
        <taxon>Brassicales</taxon>
        <taxon>Brassicaceae</taxon>
        <taxon>Camelineae</taxon>
        <taxon>Arabidopsis</taxon>
    </lineage>
</organism>
<reference key="1">
    <citation type="submission" date="1999-04" db="EMBL/GenBank/DDBJ databases">
        <title>Structural analysis of Arabidopsis thaliana chromosome 5. XI.</title>
        <authorList>
            <person name="Kaneko T."/>
            <person name="Katoh T."/>
            <person name="Asamizu E."/>
            <person name="Sato S."/>
            <person name="Nakamura Y."/>
            <person name="Kotani H."/>
            <person name="Tabata S."/>
        </authorList>
    </citation>
    <scope>NUCLEOTIDE SEQUENCE [LARGE SCALE GENOMIC DNA]</scope>
    <source>
        <strain>cv. Columbia</strain>
    </source>
</reference>
<reference key="2">
    <citation type="journal article" date="2017" name="Plant J.">
        <title>Araport11: a complete reannotation of the Arabidopsis thaliana reference genome.</title>
        <authorList>
            <person name="Cheng C.Y."/>
            <person name="Krishnakumar V."/>
            <person name="Chan A.P."/>
            <person name="Thibaud-Nissen F."/>
            <person name="Schobel S."/>
            <person name="Town C.D."/>
        </authorList>
    </citation>
    <scope>GENOME REANNOTATION</scope>
    <source>
        <strain>cv. Columbia</strain>
    </source>
</reference>
<reference key="3">
    <citation type="journal article" date="2003" name="Science">
        <title>Empirical analysis of transcriptional activity in the Arabidopsis genome.</title>
        <authorList>
            <person name="Yamada K."/>
            <person name="Lim J."/>
            <person name="Dale J.M."/>
            <person name="Chen H."/>
            <person name="Shinn P."/>
            <person name="Palm C.J."/>
            <person name="Southwick A.M."/>
            <person name="Wu H.C."/>
            <person name="Kim C.J."/>
            <person name="Nguyen M."/>
            <person name="Pham P.K."/>
            <person name="Cheuk R.F."/>
            <person name="Karlin-Newmann G."/>
            <person name="Liu S.X."/>
            <person name="Lam B."/>
            <person name="Sakano H."/>
            <person name="Wu T."/>
            <person name="Yu G."/>
            <person name="Miranda M."/>
            <person name="Quach H.L."/>
            <person name="Tripp M."/>
            <person name="Chang C.H."/>
            <person name="Lee J.M."/>
            <person name="Toriumi M.J."/>
            <person name="Chan M.M."/>
            <person name="Tang C.C."/>
            <person name="Onodera C.S."/>
            <person name="Deng J.M."/>
            <person name="Akiyama K."/>
            <person name="Ansari Y."/>
            <person name="Arakawa T."/>
            <person name="Banh J."/>
            <person name="Banno F."/>
            <person name="Bowser L."/>
            <person name="Brooks S.Y."/>
            <person name="Carninci P."/>
            <person name="Chao Q."/>
            <person name="Choy N."/>
            <person name="Enju A."/>
            <person name="Goldsmith A.D."/>
            <person name="Gurjal M."/>
            <person name="Hansen N.F."/>
            <person name="Hayashizaki Y."/>
            <person name="Johnson-Hopson C."/>
            <person name="Hsuan V.W."/>
            <person name="Iida K."/>
            <person name="Karnes M."/>
            <person name="Khan S."/>
            <person name="Koesema E."/>
            <person name="Ishida J."/>
            <person name="Jiang P.X."/>
            <person name="Jones T."/>
            <person name="Kawai J."/>
            <person name="Kamiya A."/>
            <person name="Meyers C."/>
            <person name="Nakajima M."/>
            <person name="Narusaka M."/>
            <person name="Seki M."/>
            <person name="Sakurai T."/>
            <person name="Satou M."/>
            <person name="Tamse R."/>
            <person name="Vaysberg M."/>
            <person name="Wallender E.K."/>
            <person name="Wong C."/>
            <person name="Yamamura Y."/>
            <person name="Yuan S."/>
            <person name="Shinozaki K."/>
            <person name="Davis R.W."/>
            <person name="Theologis A."/>
            <person name="Ecker J.R."/>
        </authorList>
    </citation>
    <scope>NUCLEOTIDE SEQUENCE [LARGE SCALE MRNA]</scope>
    <source>
        <strain>cv. Columbia</strain>
    </source>
</reference>
<protein>
    <recommendedName>
        <fullName>ER membrane protein complex subunit 8/9 homolog</fullName>
    </recommendedName>
    <alternativeName>
        <fullName>Protein EMBRYO DEFECTIVE 2731</fullName>
    </alternativeName>
</protein>
<comment type="similarity">
    <text evidence="2">Belongs to the EMC8/EMC9 family.</text>
</comment>
<accession>Q9FG71</accession>
<keyword id="KW-1185">Reference proteome</keyword>